<protein>
    <recommendedName>
        <fullName evidence="3">Probable pilin MJ1400</fullName>
    </recommendedName>
</protein>
<comment type="subcellular location">
    <subcellularLocation>
        <location evidence="1">Secreted</location>
    </subcellularLocation>
    <subcellularLocation>
        <location evidence="1">Cell surface</location>
    </subcellularLocation>
    <subcellularLocation>
        <location evidence="1">Fimbrium</location>
    </subcellularLocation>
</comment>
<comment type="domain">
    <text evidence="2">Contains an amino terminal motif QXSXEXXXL, which is part of a class III signal sequence.</text>
</comment>
<comment type="PTM">
    <text evidence="1">The N-terminus is cleaved by the prepilin peptidase EppA, which recognizes the class III signal sequence.</text>
</comment>
<keyword id="KW-0281">Fimbrium</keyword>
<keyword id="KW-1185">Reference proteome</keyword>
<keyword id="KW-0964">Secreted</keyword>
<dbReference type="EMBL" id="L77117">
    <property type="protein sequence ID" value="AAB99411.1"/>
    <property type="molecule type" value="Genomic_DNA"/>
</dbReference>
<dbReference type="PIR" id="G64474">
    <property type="entry name" value="G64474"/>
</dbReference>
<dbReference type="RefSeq" id="WP_010870917.1">
    <property type="nucleotide sequence ID" value="NC_000909.1"/>
</dbReference>
<dbReference type="SMR" id="Q58795"/>
<dbReference type="STRING" id="243232.MJ_1400"/>
<dbReference type="PaxDb" id="243232-MJ_1400"/>
<dbReference type="EnsemblBacteria" id="AAB99411">
    <property type="protein sequence ID" value="AAB99411"/>
    <property type="gene ID" value="MJ_1400"/>
</dbReference>
<dbReference type="GeneID" id="1452303"/>
<dbReference type="KEGG" id="mja:MJ_1400"/>
<dbReference type="eggNOG" id="arCOG05082">
    <property type="taxonomic scope" value="Archaea"/>
</dbReference>
<dbReference type="HOGENOM" id="CLU_197251_2_0_2"/>
<dbReference type="InParanoid" id="Q58795"/>
<dbReference type="OrthoDB" id="60640at2157"/>
<dbReference type="PhylomeDB" id="Q58795"/>
<dbReference type="Proteomes" id="UP000000805">
    <property type="component" value="Chromosome"/>
</dbReference>
<dbReference type="GO" id="GO:0009986">
    <property type="term" value="C:cell surface"/>
    <property type="evidence" value="ECO:0007669"/>
    <property type="project" value="UniProtKB-SubCell"/>
</dbReference>
<dbReference type="GO" id="GO:0005576">
    <property type="term" value="C:extracellular region"/>
    <property type="evidence" value="ECO:0007669"/>
    <property type="project" value="UniProtKB-SubCell"/>
</dbReference>
<dbReference type="GO" id="GO:0016020">
    <property type="term" value="C:membrane"/>
    <property type="evidence" value="ECO:0007669"/>
    <property type="project" value="UniProtKB-KW"/>
</dbReference>
<dbReference type="InterPro" id="IPR007166">
    <property type="entry name" value="Class3_signal_pept_motif"/>
</dbReference>
<dbReference type="Pfam" id="PF04021">
    <property type="entry name" value="Class_IIIsignal"/>
    <property type="match status" value="1"/>
</dbReference>
<evidence type="ECO:0000250" key="1">
    <source>
        <dbReference type="UniProtKB" id="Q6LWM4"/>
    </source>
</evidence>
<evidence type="ECO:0000250" key="2">
    <source>
        <dbReference type="UniProtKB" id="Q6M0N7"/>
    </source>
</evidence>
<evidence type="ECO:0000305" key="3"/>
<organism>
    <name type="scientific">Methanocaldococcus jannaschii (strain ATCC 43067 / DSM 2661 / JAL-1 / JCM 10045 / NBRC 100440)</name>
    <name type="common">Methanococcus jannaschii</name>
    <dbReference type="NCBI Taxonomy" id="243232"/>
    <lineage>
        <taxon>Archaea</taxon>
        <taxon>Methanobacteriati</taxon>
        <taxon>Methanobacteriota</taxon>
        <taxon>Methanomada group</taxon>
        <taxon>Methanococci</taxon>
        <taxon>Methanococcales</taxon>
        <taxon>Methanocaldococcaceae</taxon>
        <taxon>Methanocaldococcus</taxon>
    </lineage>
</organism>
<reference key="1">
    <citation type="journal article" date="1996" name="Science">
        <title>Complete genome sequence of the methanogenic archaeon, Methanococcus jannaschii.</title>
        <authorList>
            <person name="Bult C.J."/>
            <person name="White O."/>
            <person name="Olsen G.J."/>
            <person name="Zhou L."/>
            <person name="Fleischmann R.D."/>
            <person name="Sutton G.G."/>
            <person name="Blake J.A."/>
            <person name="FitzGerald L.M."/>
            <person name="Clayton R.A."/>
            <person name="Gocayne J.D."/>
            <person name="Kerlavage A.R."/>
            <person name="Dougherty B.A."/>
            <person name="Tomb J.-F."/>
            <person name="Adams M.D."/>
            <person name="Reich C.I."/>
            <person name="Overbeek R."/>
            <person name="Kirkness E.F."/>
            <person name="Weinstock K.G."/>
            <person name="Merrick J.M."/>
            <person name="Glodek A."/>
            <person name="Scott J.L."/>
            <person name="Geoghagen N.S.M."/>
            <person name="Weidman J.F."/>
            <person name="Fuhrmann J.L."/>
            <person name="Nguyen D."/>
            <person name="Utterback T.R."/>
            <person name="Kelley J.M."/>
            <person name="Peterson J.D."/>
            <person name="Sadow P.W."/>
            <person name="Hanna M.C."/>
            <person name="Cotton M.D."/>
            <person name="Roberts K.M."/>
            <person name="Hurst M.A."/>
            <person name="Kaine B.P."/>
            <person name="Borodovsky M."/>
            <person name="Klenk H.-P."/>
            <person name="Fraser C.M."/>
            <person name="Smith H.O."/>
            <person name="Woese C.R."/>
            <person name="Venter J.C."/>
        </authorList>
    </citation>
    <scope>NUCLEOTIDE SEQUENCE [LARGE SCALE GENOMIC DNA]</scope>
    <source>
        <strain>ATCC 43067 / DSM 2661 / JAL-1 / JCM 10045 / NBRC 100440</strain>
    </source>
</reference>
<gene>
    <name type="ordered locus">MJ1400</name>
</gene>
<accession>Q58795</accession>
<sequence length="67" mass="7485">MKFIMKFIKSNKGQISLEFSLLVMVVVLSAIIVSYYLIKTAIETRNANMDVINQSSNVAEKSLSNVT</sequence>
<name>Y1400_METJA</name>
<feature type="propeptide" id="PRO_0000462040" evidence="3">
    <location>
        <begin position="1"/>
        <end position="13"/>
    </location>
</feature>
<feature type="chain" id="PRO_0000218268" description="Probable pilin MJ1400">
    <location>
        <begin position="14"/>
        <end position="67"/>
    </location>
</feature>
<feature type="short sequence motif" description="QXSXEXXXL" evidence="3">
    <location>
        <begin position="14"/>
        <end position="22"/>
    </location>
</feature>
<proteinExistence type="inferred from homology"/>